<protein>
    <recommendedName>
        <fullName evidence="1">Sigma factor-binding protein Crl</fullName>
    </recommendedName>
</protein>
<evidence type="ECO:0000255" key="1">
    <source>
        <dbReference type="HAMAP-Rule" id="MF_01178"/>
    </source>
</evidence>
<dbReference type="EMBL" id="BA000037">
    <property type="protein sequence ID" value="BAC93621.1"/>
    <property type="molecule type" value="Genomic_DNA"/>
</dbReference>
<dbReference type="RefSeq" id="WP_011078431.1">
    <property type="nucleotide sequence ID" value="NC_005139.1"/>
</dbReference>
<dbReference type="SMR" id="Q7MN60"/>
<dbReference type="STRING" id="672.VV93_v1c07960"/>
<dbReference type="GeneID" id="93894668"/>
<dbReference type="KEGG" id="vvy:VV0857"/>
<dbReference type="eggNOG" id="ENOG502ZQ8E">
    <property type="taxonomic scope" value="Bacteria"/>
</dbReference>
<dbReference type="HOGENOM" id="CLU_136773_1_0_6"/>
<dbReference type="Proteomes" id="UP000002675">
    <property type="component" value="Chromosome I"/>
</dbReference>
<dbReference type="GO" id="GO:0005737">
    <property type="term" value="C:cytoplasm"/>
    <property type="evidence" value="ECO:0007669"/>
    <property type="project" value="UniProtKB-SubCell"/>
</dbReference>
<dbReference type="GO" id="GO:0045893">
    <property type="term" value="P:positive regulation of DNA-templated transcription"/>
    <property type="evidence" value="ECO:0007669"/>
    <property type="project" value="UniProtKB-UniRule"/>
</dbReference>
<dbReference type="Gene3D" id="3.30.310.230">
    <property type="entry name" value="Sigma factor-binding protein Crl monomer"/>
    <property type="match status" value="1"/>
</dbReference>
<dbReference type="HAMAP" id="MF_01178">
    <property type="entry name" value="Crl"/>
    <property type="match status" value="1"/>
</dbReference>
<dbReference type="InterPro" id="IPR009986">
    <property type="entry name" value="Tscrpt_reg_Crl"/>
</dbReference>
<dbReference type="InterPro" id="IPR038208">
    <property type="entry name" value="Tscrpt_reg_Crl_sf"/>
</dbReference>
<dbReference type="NCBIfam" id="NF008217">
    <property type="entry name" value="PRK10984.1"/>
    <property type="match status" value="1"/>
</dbReference>
<dbReference type="Pfam" id="PF07417">
    <property type="entry name" value="Crl"/>
    <property type="match status" value="1"/>
</dbReference>
<organism>
    <name type="scientific">Vibrio vulnificus (strain YJ016)</name>
    <dbReference type="NCBI Taxonomy" id="196600"/>
    <lineage>
        <taxon>Bacteria</taxon>
        <taxon>Pseudomonadati</taxon>
        <taxon>Pseudomonadota</taxon>
        <taxon>Gammaproteobacteria</taxon>
        <taxon>Vibrionales</taxon>
        <taxon>Vibrionaceae</taxon>
        <taxon>Vibrio</taxon>
    </lineage>
</organism>
<sequence length="129" mass="15062">MSEVTNNPTHNRLLAKLRAMGPYLRDPQSKEGLYYFDCLSVCIDDRKSPELREFWGWWMELEATEGGFTANYHIGKYDVEGNWLDLAIPKNALEEVNKTQNCFHLKLVKTLEENFQLSVAYHEQSVEFV</sequence>
<accession>Q7MN60</accession>
<comment type="function">
    <text evidence="1">Binds to the sigma-S subunit of RNA polymerase, activating expression of sigma-S-regulated genes. Stimulates RNA polymerase holoenzyme formation and may bind to several other sigma factors, such as sigma-70 and sigma-32.</text>
</comment>
<comment type="subcellular location">
    <subcellularLocation>
        <location evidence="1">Cytoplasm</location>
    </subcellularLocation>
</comment>
<comment type="similarity">
    <text evidence="1">Belongs to the Crl family.</text>
</comment>
<reference key="1">
    <citation type="journal article" date="2003" name="Genome Res.">
        <title>Comparative genome analysis of Vibrio vulnificus, a marine pathogen.</title>
        <authorList>
            <person name="Chen C.-Y."/>
            <person name="Wu K.-M."/>
            <person name="Chang Y.-C."/>
            <person name="Chang C.-H."/>
            <person name="Tsai H.-C."/>
            <person name="Liao T.-L."/>
            <person name="Liu Y.-M."/>
            <person name="Chen H.-J."/>
            <person name="Shen A.B.-T."/>
            <person name="Li J.-C."/>
            <person name="Su T.-L."/>
            <person name="Shao C.-P."/>
            <person name="Lee C.-T."/>
            <person name="Hor L.-I."/>
            <person name="Tsai S.-F."/>
        </authorList>
    </citation>
    <scope>NUCLEOTIDE SEQUENCE [LARGE SCALE GENOMIC DNA]</scope>
    <source>
        <strain>YJ016</strain>
    </source>
</reference>
<name>CRL_VIBVY</name>
<proteinExistence type="inferred from homology"/>
<gene>
    <name evidence="1" type="primary">crl</name>
    <name type="ordered locus">VV0857</name>
</gene>
<feature type="chain" id="PRO_0000268912" description="Sigma factor-binding protein Crl">
    <location>
        <begin position="1"/>
        <end position="129"/>
    </location>
</feature>
<feature type="region of interest" description="Essential for activity" evidence="1">
    <location>
        <begin position="99"/>
        <end position="119"/>
    </location>
</feature>
<keyword id="KW-0010">Activator</keyword>
<keyword id="KW-0963">Cytoplasm</keyword>
<keyword id="KW-0804">Transcription</keyword>
<keyword id="KW-0805">Transcription regulation</keyword>